<sequence length="357" mass="36856">MNHELRSVIDAINPVDQSLMAAAQAHLDNLTKPRGSLGRLEELAARLYCIAGGRRPLRVDPARVFTVAGDHGVSAEGVSPFPQEVTRQMVLNFANGGAGINVLCRTAGVDLRVVDAGCLGGPFPEHPALIQRKVAEGTASIARGPAMSLETCEKALLLGISLAEEAAADGCRCVGTGDMGISNTTPSTALYCAYLGLDPADITGPGAGLAGEAVRHKVEVIRRALEVNRHIVEAGDPVATLAALGGIEIATLAGLVIGAARHGLACVIDGFISTAAFTAAWKICPDVRGYCFLSHASAEPGYRSVVDALNAQPLLHLGLRLGEGTGGALAMFLMRAAADIFNDMATFADAGVSEADD</sequence>
<reference key="1">
    <citation type="journal article" date="2004" name="Nat. Biotechnol.">
        <title>The genome sequence of the anaerobic, sulfate-reducing bacterium Desulfovibrio vulgaris Hildenborough.</title>
        <authorList>
            <person name="Heidelberg J.F."/>
            <person name="Seshadri R."/>
            <person name="Haveman S.A."/>
            <person name="Hemme C.L."/>
            <person name="Paulsen I.T."/>
            <person name="Kolonay J.F."/>
            <person name="Eisen J.A."/>
            <person name="Ward N.L."/>
            <person name="Methe B.A."/>
            <person name="Brinkac L.M."/>
            <person name="Daugherty S.C."/>
            <person name="DeBoy R.T."/>
            <person name="Dodson R.J."/>
            <person name="Durkin A.S."/>
            <person name="Madupu R."/>
            <person name="Nelson W.C."/>
            <person name="Sullivan S.A."/>
            <person name="Fouts D.E."/>
            <person name="Haft D.H."/>
            <person name="Selengut J."/>
            <person name="Peterson J.D."/>
            <person name="Davidsen T.M."/>
            <person name="Zafar N."/>
            <person name="Zhou L."/>
            <person name="Radune D."/>
            <person name="Dimitrov G."/>
            <person name="Hance M."/>
            <person name="Tran K."/>
            <person name="Khouri H.M."/>
            <person name="Gill J."/>
            <person name="Utterback T.R."/>
            <person name="Feldblyum T.V."/>
            <person name="Wall J.D."/>
            <person name="Voordouw G."/>
            <person name="Fraser C.M."/>
        </authorList>
    </citation>
    <scope>NUCLEOTIDE SEQUENCE [LARGE SCALE GENOMIC DNA]</scope>
    <source>
        <strain>ATCC 29579 / DSM 644 / CCUG 34227 / NCIMB 8303 / VKM B-1760 / Hildenborough</strain>
    </source>
</reference>
<protein>
    <recommendedName>
        <fullName evidence="1">Nicotinate-nucleotide--dimethylbenzimidazole phosphoribosyltransferase</fullName>
        <shortName evidence="1">NN:DBI PRT</shortName>
        <ecNumber evidence="1">2.4.2.21</ecNumber>
    </recommendedName>
    <alternativeName>
        <fullName evidence="1">N(1)-alpha-phosphoribosyltransferase</fullName>
    </alternativeName>
</protein>
<gene>
    <name evidence="1" type="primary">cobT</name>
    <name type="ordered locus">DVU_3279</name>
</gene>
<feature type="chain" id="PRO_1000021592" description="Nicotinate-nucleotide--dimethylbenzimidazole phosphoribosyltransferase">
    <location>
        <begin position="1"/>
        <end position="357"/>
    </location>
</feature>
<feature type="active site" description="Proton acceptor" evidence="1">
    <location>
        <position position="323"/>
    </location>
</feature>
<evidence type="ECO:0000255" key="1">
    <source>
        <dbReference type="HAMAP-Rule" id="MF_00230"/>
    </source>
</evidence>
<dbReference type="EC" id="2.4.2.21" evidence="1"/>
<dbReference type="EMBL" id="AE017285">
    <property type="protein sequence ID" value="AAS97749.1"/>
    <property type="molecule type" value="Genomic_DNA"/>
</dbReference>
<dbReference type="RefSeq" id="WP_010940537.1">
    <property type="nucleotide sequence ID" value="NC_002937.3"/>
</dbReference>
<dbReference type="RefSeq" id="YP_012489.1">
    <property type="nucleotide sequence ID" value="NC_002937.3"/>
</dbReference>
<dbReference type="SMR" id="Q725Z4"/>
<dbReference type="STRING" id="882.DVU_3279"/>
<dbReference type="PaxDb" id="882-DVU_3279"/>
<dbReference type="EnsemblBacteria" id="AAS97749">
    <property type="protein sequence ID" value="AAS97749"/>
    <property type="gene ID" value="DVU_3279"/>
</dbReference>
<dbReference type="KEGG" id="dvu:DVU_3279"/>
<dbReference type="PATRIC" id="fig|882.5.peg.2982"/>
<dbReference type="eggNOG" id="COG2038">
    <property type="taxonomic scope" value="Bacteria"/>
</dbReference>
<dbReference type="HOGENOM" id="CLU_002982_0_0_7"/>
<dbReference type="OrthoDB" id="9781491at2"/>
<dbReference type="PhylomeDB" id="Q725Z4"/>
<dbReference type="UniPathway" id="UPA00061">
    <property type="reaction ID" value="UER00516"/>
</dbReference>
<dbReference type="Proteomes" id="UP000002194">
    <property type="component" value="Chromosome"/>
</dbReference>
<dbReference type="GO" id="GO:0008939">
    <property type="term" value="F:nicotinate-nucleotide-dimethylbenzimidazole phosphoribosyltransferase activity"/>
    <property type="evidence" value="ECO:0007669"/>
    <property type="project" value="UniProtKB-UniRule"/>
</dbReference>
<dbReference type="GO" id="GO:0009236">
    <property type="term" value="P:cobalamin biosynthetic process"/>
    <property type="evidence" value="ECO:0007669"/>
    <property type="project" value="UniProtKB-KW"/>
</dbReference>
<dbReference type="CDD" id="cd02439">
    <property type="entry name" value="DMB-PRT_CobT"/>
    <property type="match status" value="1"/>
</dbReference>
<dbReference type="FunFam" id="3.40.50.10210:FF:000001">
    <property type="entry name" value="Nicotinate-nucleotide--dimethylbenzimidazole phosphoribosyltransferase"/>
    <property type="match status" value="1"/>
</dbReference>
<dbReference type="Gene3D" id="1.10.1610.10">
    <property type="match status" value="1"/>
</dbReference>
<dbReference type="Gene3D" id="3.40.50.10210">
    <property type="match status" value="1"/>
</dbReference>
<dbReference type="HAMAP" id="MF_00230">
    <property type="entry name" value="CobT"/>
    <property type="match status" value="1"/>
</dbReference>
<dbReference type="InterPro" id="IPR003200">
    <property type="entry name" value="Nict_dMeBzImd_PRibTrfase"/>
</dbReference>
<dbReference type="InterPro" id="IPR017846">
    <property type="entry name" value="Nict_dMeBzImd_PRibTrfase_bact"/>
</dbReference>
<dbReference type="InterPro" id="IPR023195">
    <property type="entry name" value="Nict_dMeBzImd_PRibTrfase_N"/>
</dbReference>
<dbReference type="InterPro" id="IPR036087">
    <property type="entry name" value="Nict_dMeBzImd_PRibTrfase_sf"/>
</dbReference>
<dbReference type="NCBIfam" id="TIGR03160">
    <property type="entry name" value="cobT_DBIPRT"/>
    <property type="match status" value="1"/>
</dbReference>
<dbReference type="NCBIfam" id="NF000996">
    <property type="entry name" value="PRK00105.1"/>
    <property type="match status" value="1"/>
</dbReference>
<dbReference type="PANTHER" id="PTHR43463">
    <property type="entry name" value="NICOTINATE-NUCLEOTIDE--DIMETHYLBENZIMIDAZOLE PHOSPHORIBOSYLTRANSFERASE"/>
    <property type="match status" value="1"/>
</dbReference>
<dbReference type="PANTHER" id="PTHR43463:SF1">
    <property type="entry name" value="NICOTINATE-NUCLEOTIDE--DIMETHYLBENZIMIDAZOLE PHOSPHORIBOSYLTRANSFERASE"/>
    <property type="match status" value="1"/>
</dbReference>
<dbReference type="Pfam" id="PF02277">
    <property type="entry name" value="DBI_PRT"/>
    <property type="match status" value="1"/>
</dbReference>
<dbReference type="SUPFAM" id="SSF52733">
    <property type="entry name" value="Nicotinate mononucleotide:5,6-dimethylbenzimidazole phosphoribosyltransferase (CobT)"/>
    <property type="match status" value="1"/>
</dbReference>
<keyword id="KW-0169">Cobalamin biosynthesis</keyword>
<keyword id="KW-0328">Glycosyltransferase</keyword>
<keyword id="KW-1185">Reference proteome</keyword>
<keyword id="KW-0808">Transferase</keyword>
<name>COBT_NITV2</name>
<accession>Q725Z4</accession>
<proteinExistence type="inferred from homology"/>
<comment type="function">
    <text evidence="1">Catalyzes the synthesis of alpha-ribazole-5'-phosphate from nicotinate mononucleotide (NAMN) and 5,6-dimethylbenzimidazole (DMB).</text>
</comment>
<comment type="catalytic activity">
    <reaction evidence="1">
        <text>5,6-dimethylbenzimidazole + nicotinate beta-D-ribonucleotide = alpha-ribazole 5'-phosphate + nicotinate + H(+)</text>
        <dbReference type="Rhea" id="RHEA:11196"/>
        <dbReference type="ChEBI" id="CHEBI:15378"/>
        <dbReference type="ChEBI" id="CHEBI:15890"/>
        <dbReference type="ChEBI" id="CHEBI:32544"/>
        <dbReference type="ChEBI" id="CHEBI:57502"/>
        <dbReference type="ChEBI" id="CHEBI:57918"/>
        <dbReference type="EC" id="2.4.2.21"/>
    </reaction>
</comment>
<comment type="pathway">
    <text evidence="1">Nucleoside biosynthesis; alpha-ribazole biosynthesis; alpha-ribazole from 5,6-dimethylbenzimidazole: step 1/2.</text>
</comment>
<comment type="similarity">
    <text evidence="1">Belongs to the CobT family.</text>
</comment>
<organism>
    <name type="scientific">Nitratidesulfovibrio vulgaris (strain ATCC 29579 / DSM 644 / CCUG 34227 / NCIMB 8303 / VKM B-1760 / Hildenborough)</name>
    <name type="common">Desulfovibrio vulgaris</name>
    <dbReference type="NCBI Taxonomy" id="882"/>
    <lineage>
        <taxon>Bacteria</taxon>
        <taxon>Pseudomonadati</taxon>
        <taxon>Thermodesulfobacteriota</taxon>
        <taxon>Desulfovibrionia</taxon>
        <taxon>Desulfovibrionales</taxon>
        <taxon>Desulfovibrionaceae</taxon>
        <taxon>Nitratidesulfovibrio</taxon>
    </lineage>
</organism>